<comment type="function">
    <text>Transcriptional repressor of xylose-utilizing enzymes.</text>
</comment>
<comment type="similarity">
    <text evidence="2">Belongs to the ROK (NagC/XylR) family.</text>
</comment>
<reference key="1">
    <citation type="journal article" date="1991" name="Mol. Gen. Genet.">
        <title>Organization, promoter analysis and transcriptional regulation of the Staphylococcus xylosus xylose utilization operon.</title>
        <authorList>
            <person name="Sizemore C."/>
            <person name="Buchner E."/>
            <person name="Rygus T."/>
            <person name="Witke C."/>
            <person name="Goetz F."/>
            <person name="Hillen W."/>
        </authorList>
    </citation>
    <scope>NUCLEOTIDE SEQUENCE [GENOMIC DNA]</scope>
    <source>
        <strain>DSM 20267 / Isolate C2A</strain>
    </source>
</reference>
<evidence type="ECO:0000250" key="1"/>
<evidence type="ECO:0000305" key="2"/>
<gene>
    <name type="primary">xylR</name>
</gene>
<organism>
    <name type="scientific">Staphylococcus xylosus</name>
    <dbReference type="NCBI Taxonomy" id="1288"/>
    <lineage>
        <taxon>Bacteria</taxon>
        <taxon>Bacillati</taxon>
        <taxon>Bacillota</taxon>
        <taxon>Bacilli</taxon>
        <taxon>Bacillales</taxon>
        <taxon>Staphylococcaceae</taxon>
        <taxon>Staphylococcus</taxon>
    </lineage>
</organism>
<protein>
    <recommendedName>
        <fullName>Xylose repressor</fullName>
    </recommendedName>
</protein>
<accession>P27159</accession>
<proteinExistence type="inferred from homology"/>
<keyword id="KW-0119">Carbohydrate metabolism</keyword>
<keyword id="KW-0238">DNA-binding</keyword>
<keyword id="KW-0678">Repressor</keyword>
<keyword id="KW-0804">Transcription</keyword>
<keyword id="KW-0805">Transcription regulation</keyword>
<keyword id="KW-0859">Xylose metabolism</keyword>
<sequence length="383" mass="43376">MENNFIVNENEKRVLKQIFNNSNISRTQISKNLELNKATISNILNNLKHKSLVNEVGEGNSTKSGGRKPILLEINQKYGYYISMDLTYDSVELMYNYFDATILKQDSYELNDKNVSSILQILKSNINVSEKYDTLYGLLGISISIHGIVDDEQNIINLPFHKNEKRTFTDELKSFTNVPVVIENEANLSALYEKSLYINSNINNLITLSIHKGIGAGIIINKKLYRGSNGEAGEIGKTLVLESINNNDNKYYKIEDICSQDALIQKINNRLGVTLTFTELIQYYNEGNSIVAHEIKQFINKMTVLIHNLNTQFNPDAIYINCPLINELPNILNEIKEQFSCFSQGSPIQLHLTTNVKQATLLGGTLAIMQKTLNINNIQMNIK</sequence>
<dbReference type="EMBL" id="X57599">
    <property type="protein sequence ID" value="CAA40823.1"/>
    <property type="molecule type" value="Genomic_DNA"/>
</dbReference>
<dbReference type="PIR" id="S16529">
    <property type="entry name" value="S16529"/>
</dbReference>
<dbReference type="RefSeq" id="WP_047171713.1">
    <property type="nucleotide sequence ID" value="NZ_CP031275.1"/>
</dbReference>
<dbReference type="SMR" id="P27159"/>
<dbReference type="STRING" id="1288.AWC37_11465"/>
<dbReference type="eggNOG" id="COG1846">
    <property type="taxonomic scope" value="Bacteria"/>
</dbReference>
<dbReference type="eggNOG" id="COG1940">
    <property type="taxonomic scope" value="Bacteria"/>
</dbReference>
<dbReference type="OrthoDB" id="9796533at2"/>
<dbReference type="GO" id="GO:0003677">
    <property type="term" value="F:DNA binding"/>
    <property type="evidence" value="ECO:0007669"/>
    <property type="project" value="UniProtKB-KW"/>
</dbReference>
<dbReference type="GO" id="GO:0042732">
    <property type="term" value="P:D-xylose metabolic process"/>
    <property type="evidence" value="ECO:0007669"/>
    <property type="project" value="UniProtKB-KW"/>
</dbReference>
<dbReference type="Gene3D" id="3.30.420.40">
    <property type="match status" value="2"/>
</dbReference>
<dbReference type="Gene3D" id="1.10.10.10">
    <property type="entry name" value="Winged helix-like DNA-binding domain superfamily/Winged helix DNA-binding domain"/>
    <property type="match status" value="1"/>
</dbReference>
<dbReference type="InterPro" id="IPR043129">
    <property type="entry name" value="ATPase_NBD"/>
</dbReference>
<dbReference type="InterPro" id="IPR000600">
    <property type="entry name" value="ROK"/>
</dbReference>
<dbReference type="InterPro" id="IPR049874">
    <property type="entry name" value="ROK_cs"/>
</dbReference>
<dbReference type="InterPro" id="IPR036388">
    <property type="entry name" value="WH-like_DNA-bd_sf"/>
</dbReference>
<dbReference type="InterPro" id="IPR036390">
    <property type="entry name" value="WH_DNA-bd_sf"/>
</dbReference>
<dbReference type="PANTHER" id="PTHR18964:SF149">
    <property type="entry name" value="BIFUNCTIONAL UDP-N-ACETYLGLUCOSAMINE 2-EPIMERASE_N-ACETYLMANNOSAMINE KINASE"/>
    <property type="match status" value="1"/>
</dbReference>
<dbReference type="PANTHER" id="PTHR18964">
    <property type="entry name" value="ROK (REPRESSOR, ORF, KINASE) FAMILY"/>
    <property type="match status" value="1"/>
</dbReference>
<dbReference type="Pfam" id="PF00480">
    <property type="entry name" value="ROK"/>
    <property type="match status" value="1"/>
</dbReference>
<dbReference type="SUPFAM" id="SSF53067">
    <property type="entry name" value="Actin-like ATPase domain"/>
    <property type="match status" value="1"/>
</dbReference>
<dbReference type="SUPFAM" id="SSF46785">
    <property type="entry name" value="Winged helix' DNA-binding domain"/>
    <property type="match status" value="1"/>
</dbReference>
<dbReference type="PROSITE" id="PS01125">
    <property type="entry name" value="ROK"/>
    <property type="match status" value="1"/>
</dbReference>
<name>XYLR_STAXY</name>
<feature type="chain" id="PRO_0000095714" description="Xylose repressor">
    <location>
        <begin position="1"/>
        <end position="383"/>
    </location>
</feature>
<feature type="DNA-binding region" description="H-T-H motif" evidence="1">
    <location>
        <begin position="26"/>
        <end position="45"/>
    </location>
</feature>